<comment type="subcellular location">
    <subcellularLocation>
        <location evidence="4">Cell projection</location>
        <location evidence="4">Cilium</location>
        <location evidence="4">Flagellum</location>
    </subcellularLocation>
</comment>
<comment type="similarity">
    <text evidence="6">Belongs to the CFAP157 family.</text>
</comment>
<feature type="chain" id="PRO_0000437490" description="Cilia- and flagella-associated protein 157">
    <location>
        <begin position="1"/>
        <end position="1206"/>
    </location>
</feature>
<feature type="region of interest" description="Disordered" evidence="3">
    <location>
        <begin position="26"/>
        <end position="52"/>
    </location>
</feature>
<feature type="region of interest" description="Disordered" evidence="3">
    <location>
        <begin position="79"/>
        <end position="109"/>
    </location>
</feature>
<feature type="region of interest" description="Disordered" evidence="3">
    <location>
        <begin position="125"/>
        <end position="173"/>
    </location>
</feature>
<feature type="region of interest" description="Disordered" evidence="3">
    <location>
        <begin position="327"/>
        <end position="405"/>
    </location>
</feature>
<feature type="region of interest" description="Disordered" evidence="3">
    <location>
        <begin position="936"/>
        <end position="990"/>
    </location>
</feature>
<feature type="region of interest" description="Disordered" evidence="3">
    <location>
        <begin position="1011"/>
        <end position="1072"/>
    </location>
</feature>
<feature type="region of interest" description="Disordered" evidence="3">
    <location>
        <begin position="1168"/>
        <end position="1206"/>
    </location>
</feature>
<feature type="coiled-coil region" evidence="2">
    <location>
        <begin position="634"/>
        <end position="732"/>
    </location>
</feature>
<feature type="coiled-coil region" evidence="2">
    <location>
        <begin position="799"/>
        <end position="833"/>
    </location>
</feature>
<feature type="coiled-coil region" evidence="2">
    <location>
        <begin position="876"/>
        <end position="903"/>
    </location>
</feature>
<feature type="compositionally biased region" description="Low complexity" evidence="3">
    <location>
        <begin position="88"/>
        <end position="109"/>
    </location>
</feature>
<feature type="compositionally biased region" description="Low complexity" evidence="3">
    <location>
        <begin position="156"/>
        <end position="173"/>
    </location>
</feature>
<feature type="compositionally biased region" description="Low complexity" evidence="3">
    <location>
        <begin position="385"/>
        <end position="397"/>
    </location>
</feature>
<feature type="compositionally biased region" description="Low complexity" evidence="3">
    <location>
        <begin position="951"/>
        <end position="973"/>
    </location>
</feature>
<feature type="compositionally biased region" description="Low complexity" evidence="3">
    <location>
        <begin position="1014"/>
        <end position="1035"/>
    </location>
</feature>
<feature type="compositionally biased region" description="Gly residues" evidence="3">
    <location>
        <begin position="1037"/>
        <end position="1046"/>
    </location>
</feature>
<feature type="compositionally biased region" description="Gly residues" evidence="3">
    <location>
        <begin position="1058"/>
        <end position="1067"/>
    </location>
</feature>
<feature type="compositionally biased region" description="Polar residues" evidence="3">
    <location>
        <begin position="1175"/>
        <end position="1184"/>
    </location>
</feature>
<feature type="compositionally biased region" description="Polar residues" evidence="3">
    <location>
        <begin position="1193"/>
        <end position="1206"/>
    </location>
</feature>
<sequence length="1206" mass="126128">MWAVARLGLRLRASWWEAQAGRLMPGGGGGSAAAAAMQEEQGEQEGPTGRDLSNALYALGEGVVANTLWALQQLLAPARAEQEHPQEGRPQQQEQGGEARQEQQGQQAPRQLWWALLERSRQHMEATCVQQQGQGRGQAADGKSTSSRGAAGGGVAKAVARGPRGAGTARGPLGTAAAPLRRVLWGAGRQDVCVYLSGLRRLHMPPPPSLAVPLMQRLEQQLLAAEGEAQAEAAVPARAPPSTASTAAPPSARCLVYLAVELSHMGPLGPLGPLGPLGKAQAGGQQVPVQVQVPGVEADVGSLGARECADLCVALVRLGVSLPRGAGSGKATMPHPHPSPHLRYDEQPQLSGADLGPSADMAPLPLDTGERALPEPSSHPPVARQQLGEQPGEQPGGPHEDEEDWDPAFVADGYEAEAGELPKRPSASGGGMEGSFSLPQQLALAQSLHWLDQAAAHMMQTGAEDAASVDEEAEAPEADAVLAAALAAARDDTALYLFCSWAPSSLSSLSSLSATATATAAALRLRLTGAAHVVEGAALQAAAAALDAACWKQQGAGPGVVVGKDREVQAAAPAGPPGDLEAEQVVCAPCMCTGSIDTPDQPPAPNNLNNPHPSAFHRYQDHGDRLQVDVVRLTDELETQKLNLRDINEFLTNELKSKVAELNGLMDEVKKSHEASLARLRGDKDRELERLEGVVREHERKARITQEFLDKKEALEAEMQSLKETLARKTKDFEQQLTDIDRQHIQDREKWKREMAGRIKETKLQMMKLTDNQLEMTTKRTIMENEQMSIELSYQSRQTEKLLNKNNKLMEENAELRRQLELSKQTEEELARRNNLYQKTIKTLLSKLQDQGYQAAESEEVLGALDGRLGDLAAHLHLAQLQLEEKSAEADALRERLESKTAEAAALTSGYDDTARFLLACMADVRDKVVTVVRTTTTNNTSSDERLPPLAGADAAGGSRSGSPTPPGASSSAAGGGDITVLPGRLDELSPEQRERVLGWLLERLHYATGLSHGPLSQSSPAPLSAGGMGSALAGEWGPGSPGGSRLGRLPTREQDGSAGGMGGPQGLGATSGAAAAAAGAGGGLDGVSSLGGLGYGLGYGGVGVSSSVMAGMSPGPGVPGYSVSTGDVMPGGGMLGGAGVIGGGTGGGAGGAVVDEALAKVLSEVRPWGKRSEQQPLTTTKHSGTFLRKGNGPSNNTGSRGSLKV</sequence>
<keyword id="KW-0966">Cell projection</keyword>
<keyword id="KW-0969">Cilium</keyword>
<keyword id="KW-0175">Coiled coil</keyword>
<keyword id="KW-0282">Flagellum</keyword>
<reference key="1">
    <citation type="journal article" date="2007" name="Science">
        <title>The Chlamydomonas genome reveals the evolution of key animal and plant functions.</title>
        <authorList>
            <person name="Merchant S.S."/>
            <person name="Prochnik S.E."/>
            <person name="Vallon O."/>
            <person name="Harris E.H."/>
            <person name="Karpowicz S.J."/>
            <person name="Witman G.B."/>
            <person name="Terry A."/>
            <person name="Salamov A."/>
            <person name="Fritz-Laylin L.K."/>
            <person name="Marechal-Drouard L."/>
            <person name="Marshall W.F."/>
            <person name="Qu L.H."/>
            <person name="Nelson D.R."/>
            <person name="Sanderfoot A.A."/>
            <person name="Spalding M.H."/>
            <person name="Kapitonov V.V."/>
            <person name="Ren Q."/>
            <person name="Ferris P."/>
            <person name="Lindquist E."/>
            <person name="Shapiro H."/>
            <person name="Lucas S.M."/>
            <person name="Grimwood J."/>
            <person name="Schmutz J."/>
            <person name="Cardol P."/>
            <person name="Cerutti H."/>
            <person name="Chanfreau G."/>
            <person name="Chen C.L."/>
            <person name="Cognat V."/>
            <person name="Croft M.T."/>
            <person name="Dent R."/>
            <person name="Dutcher S."/>
            <person name="Fernandez E."/>
            <person name="Fukuzawa H."/>
            <person name="Gonzalez-Ballester D."/>
            <person name="Gonzalez-Halphen D."/>
            <person name="Hallmann A."/>
            <person name="Hanikenne M."/>
            <person name="Hippler M."/>
            <person name="Inwood W."/>
            <person name="Jabbari K."/>
            <person name="Kalanon M."/>
            <person name="Kuras R."/>
            <person name="Lefebvre P.A."/>
            <person name="Lemaire S.D."/>
            <person name="Lobanov A.V."/>
            <person name="Lohr M."/>
            <person name="Manuell A."/>
            <person name="Meier I."/>
            <person name="Mets L."/>
            <person name="Mittag M."/>
            <person name="Mittelmeier T."/>
            <person name="Moroney J.V."/>
            <person name="Moseley J."/>
            <person name="Napoli C."/>
            <person name="Nedelcu A.M."/>
            <person name="Niyogi K."/>
            <person name="Novoselov S.V."/>
            <person name="Paulsen I.T."/>
            <person name="Pazour G.J."/>
            <person name="Purton S."/>
            <person name="Ral J.P."/>
            <person name="Riano-Pachon D.M."/>
            <person name="Riekhof W."/>
            <person name="Rymarquis L."/>
            <person name="Schroda M."/>
            <person name="Stern D."/>
            <person name="Umen J."/>
            <person name="Willows R."/>
            <person name="Wilson N."/>
            <person name="Zimmer S.L."/>
            <person name="Allmer J."/>
            <person name="Balk J."/>
            <person name="Bisova K."/>
            <person name="Chen C.J."/>
            <person name="Elias M."/>
            <person name="Gendler K."/>
            <person name="Hauser C."/>
            <person name="Lamb M.R."/>
            <person name="Ledford H."/>
            <person name="Long J.C."/>
            <person name="Minagawa J."/>
            <person name="Page M.D."/>
            <person name="Pan J."/>
            <person name="Pootakham W."/>
            <person name="Roje S."/>
            <person name="Rose A."/>
            <person name="Stahlberg E."/>
            <person name="Terauchi A.M."/>
            <person name="Yang P."/>
            <person name="Ball S."/>
            <person name="Bowler C."/>
            <person name="Dieckmann C.L."/>
            <person name="Gladyshev V.N."/>
            <person name="Green P."/>
            <person name="Jorgensen R."/>
            <person name="Mayfield S."/>
            <person name="Mueller-Roeber B."/>
            <person name="Rajamani S."/>
            <person name="Sayre R.T."/>
            <person name="Brokstein P."/>
            <person name="Dubchak I."/>
            <person name="Goodstein D."/>
            <person name="Hornick L."/>
            <person name="Huang Y.W."/>
            <person name="Jhaveri J."/>
            <person name="Luo Y."/>
            <person name="Martinez D."/>
            <person name="Ngau W.C."/>
            <person name="Otillar B."/>
            <person name="Poliakov A."/>
            <person name="Porter A."/>
            <person name="Szajkowski L."/>
            <person name="Werner G."/>
            <person name="Zhou K."/>
            <person name="Grigoriev I.V."/>
            <person name="Rokhsar D.S."/>
            <person name="Grossman A.R."/>
        </authorList>
    </citation>
    <scope>NUCLEOTIDE SEQUENCE [LARGE SCALE GENOMIC DNA]</scope>
    <source>
        <strain>CC-503</strain>
    </source>
</reference>
<reference key="2">
    <citation type="journal article" date="2005" name="J. Cell Biol.">
        <title>Proteomic analysis of a eukaryotic cilium.</title>
        <authorList>
            <person name="Pazour G.J."/>
            <person name="Agrin N."/>
            <person name="Leszyk J."/>
            <person name="Witman G.B."/>
        </authorList>
    </citation>
    <scope>IDENTIFICATION BY MASS SPECTROMETRY</scope>
    <scope>SUBCELLULAR LOCATION</scope>
</reference>
<evidence type="ECO:0000250" key="1">
    <source>
        <dbReference type="UniProtKB" id="Q5JU67"/>
    </source>
</evidence>
<evidence type="ECO:0000255" key="2"/>
<evidence type="ECO:0000256" key="3">
    <source>
        <dbReference type="SAM" id="MobiDB-lite"/>
    </source>
</evidence>
<evidence type="ECO:0000269" key="4">
    <source>
    </source>
</evidence>
<evidence type="ECO:0000303" key="5">
    <source>
    </source>
</evidence>
<evidence type="ECO:0000305" key="6"/>
<evidence type="ECO:0000312" key="7">
    <source>
        <dbReference type="EMBL" id="EDO96356.1"/>
    </source>
</evidence>
<dbReference type="EMBL" id="DS496202">
    <property type="protein sequence ID" value="EDO96356.1"/>
    <property type="molecule type" value="Genomic_DNA"/>
</dbReference>
<dbReference type="RefSeq" id="XP_001703716.1">
    <property type="nucleotide sequence ID" value="XM_001703664.1"/>
</dbReference>
<dbReference type="SMR" id="A8JID5"/>
<dbReference type="PaxDb" id="3055-EDO96356"/>
<dbReference type="eggNOG" id="ENOG502R31A">
    <property type="taxonomic scope" value="Eukaryota"/>
</dbReference>
<dbReference type="HOGENOM" id="CLU_270257_0_0_1"/>
<dbReference type="GO" id="GO:0031514">
    <property type="term" value="C:motile cilium"/>
    <property type="evidence" value="ECO:0007669"/>
    <property type="project" value="UniProtKB-SubCell"/>
</dbReference>
<dbReference type="InterPro" id="IPR038844">
    <property type="entry name" value="CFAP157"/>
</dbReference>
<dbReference type="PANTHER" id="PTHR31954">
    <property type="entry name" value="CILIA- AND FLAGELLA-ASSOCIATED PROTEIN 157"/>
    <property type="match status" value="1"/>
</dbReference>
<dbReference type="PANTHER" id="PTHR31954:SF1">
    <property type="entry name" value="CILIA- AND FLAGELLA-ASSOCIATED PROTEIN 157"/>
    <property type="match status" value="1"/>
</dbReference>
<organism>
    <name type="scientific">Chlamydomonas reinhardtii</name>
    <name type="common">Chlamydomonas smithii</name>
    <dbReference type="NCBI Taxonomy" id="3055"/>
    <lineage>
        <taxon>Eukaryota</taxon>
        <taxon>Viridiplantae</taxon>
        <taxon>Chlorophyta</taxon>
        <taxon>core chlorophytes</taxon>
        <taxon>Chlorophyceae</taxon>
        <taxon>CS clade</taxon>
        <taxon>Chlamydomonadales</taxon>
        <taxon>Chlamydomonadaceae</taxon>
        <taxon>Chlamydomonas</taxon>
    </lineage>
</organism>
<gene>
    <name evidence="1" type="primary">CFAP157</name>
    <name evidence="5" type="synonym">FAP157</name>
    <name evidence="7" type="ORF">CHLREDRAFT_180708</name>
</gene>
<proteinExistence type="evidence at protein level"/>
<name>CF157_CHLRE</name>
<protein>
    <recommendedName>
        <fullName>Cilia- and flagella-associated protein 157</fullName>
    </recommendedName>
    <alternativeName>
        <fullName evidence="5">Flagellar-associated protein 77</fullName>
    </alternativeName>
</protein>
<accession>A8JID5</accession>